<organism>
    <name type="scientific">Leiurus hebraeus</name>
    <name type="common">Hebrew deathstalker scorpion</name>
    <name type="synonym">Leiurus quinquestriatus hebraeus</name>
    <dbReference type="NCBI Taxonomy" id="2899558"/>
    <lineage>
        <taxon>Eukaryota</taxon>
        <taxon>Metazoa</taxon>
        <taxon>Ecdysozoa</taxon>
        <taxon>Arthropoda</taxon>
        <taxon>Chelicerata</taxon>
        <taxon>Arachnida</taxon>
        <taxon>Scorpiones</taxon>
        <taxon>Buthida</taxon>
        <taxon>Buthoidea</taxon>
        <taxon>Buthidae</taxon>
        <taxon>Leiurus</taxon>
    </lineage>
</organism>
<feature type="signal peptide">
    <location>
        <begin position="1"/>
        <end position="21"/>
    </location>
</feature>
<feature type="chain" id="PRO_0000307611" description="Beta-insect depressant toxin Lqh-dprIT3a">
    <location>
        <begin position="22"/>
        <end position="82"/>
    </location>
</feature>
<feature type="domain" description="LCN-type CS-alpha/beta" evidence="2">
    <location>
        <begin position="22"/>
        <end position="82"/>
    </location>
</feature>
<feature type="site" description="Important for toxicity">
    <location>
        <position position="79"/>
    </location>
</feature>
<feature type="modified residue" description="Glycine amide" evidence="1">
    <location>
        <position position="82"/>
    </location>
</feature>
<feature type="disulfide bond" evidence="2">
    <location>
        <begin position="31"/>
        <end position="81"/>
    </location>
</feature>
<feature type="disulfide bond" evidence="2">
    <location>
        <begin position="35"/>
        <end position="56"/>
    </location>
</feature>
<feature type="disulfide bond" evidence="2">
    <location>
        <begin position="42"/>
        <end position="63"/>
    </location>
</feature>
<feature type="disulfide bond" evidence="2">
    <location>
        <begin position="46"/>
        <end position="65"/>
    </location>
</feature>
<proteinExistence type="evidence at protein level"/>
<reference key="1">
    <citation type="journal article" date="2005" name="Biochemistry">
        <title>Genetic polymorphism and expression of a highly potent scorpion depressant toxin enable refinement of the effects on insect Na channels and illuminate the key role of Asn-58.</title>
        <authorList>
            <person name="Strugatsky D."/>
            <person name="Zilberberg N."/>
            <person name="Stankiewicz M."/>
            <person name="Ilan N."/>
            <person name="Turkov M."/>
            <person name="Cohen L."/>
            <person name="Pelhate M."/>
            <person name="Gilles N."/>
            <person name="Gordon D."/>
            <person name="Gurevitz M."/>
        </authorList>
    </citation>
    <scope>NUCLEOTIDE SEQUENCE [MRNA]</scope>
    <scope>PARTIAL PROTEIN SEQUENCE</scope>
    <scope>FUNCTION</scope>
    <scope>TOXIC DOSE</scope>
    <source>
        <tissue>Venom</tissue>
        <tissue>Venom gland</tissue>
    </source>
</reference>
<dbReference type="SMR" id="P0C5I3"/>
<dbReference type="GO" id="GO:0005576">
    <property type="term" value="C:extracellular region"/>
    <property type="evidence" value="ECO:0007669"/>
    <property type="project" value="UniProtKB-SubCell"/>
</dbReference>
<dbReference type="GO" id="GO:0019871">
    <property type="term" value="F:sodium channel inhibitor activity"/>
    <property type="evidence" value="ECO:0007669"/>
    <property type="project" value="InterPro"/>
</dbReference>
<dbReference type="GO" id="GO:0090729">
    <property type="term" value="F:toxin activity"/>
    <property type="evidence" value="ECO:0007669"/>
    <property type="project" value="UniProtKB-KW"/>
</dbReference>
<dbReference type="GO" id="GO:0006952">
    <property type="term" value="P:defense response"/>
    <property type="evidence" value="ECO:0007669"/>
    <property type="project" value="InterPro"/>
</dbReference>
<dbReference type="CDD" id="cd23106">
    <property type="entry name" value="neurotoxins_LC_scorpion"/>
    <property type="match status" value="1"/>
</dbReference>
<dbReference type="Gene3D" id="3.30.30.10">
    <property type="entry name" value="Knottin, scorpion toxin-like"/>
    <property type="match status" value="1"/>
</dbReference>
<dbReference type="InterPro" id="IPR044062">
    <property type="entry name" value="LCN-type_CS_alpha_beta_dom"/>
</dbReference>
<dbReference type="InterPro" id="IPR003614">
    <property type="entry name" value="Scorpion_toxin-like"/>
</dbReference>
<dbReference type="InterPro" id="IPR036574">
    <property type="entry name" value="Scorpion_toxin-like_sf"/>
</dbReference>
<dbReference type="InterPro" id="IPR018218">
    <property type="entry name" value="Scorpion_toxinL"/>
</dbReference>
<dbReference type="InterPro" id="IPR002061">
    <property type="entry name" value="Scorpion_toxinL/defensin"/>
</dbReference>
<dbReference type="Pfam" id="PF00537">
    <property type="entry name" value="Toxin_3"/>
    <property type="match status" value="1"/>
</dbReference>
<dbReference type="PRINTS" id="PR00285">
    <property type="entry name" value="SCORPNTOXIN"/>
</dbReference>
<dbReference type="SMART" id="SM00505">
    <property type="entry name" value="Knot1"/>
    <property type="match status" value="1"/>
</dbReference>
<dbReference type="SUPFAM" id="SSF57095">
    <property type="entry name" value="Scorpion toxin-like"/>
    <property type="match status" value="1"/>
</dbReference>
<dbReference type="PROSITE" id="PS51863">
    <property type="entry name" value="LCN_CSAB"/>
    <property type="match status" value="1"/>
</dbReference>
<accession>P0C5I3</accession>
<evidence type="ECO:0000250" key="1"/>
<evidence type="ECO:0000255" key="2">
    <source>
        <dbReference type="PROSITE-ProRule" id="PRU01210"/>
    </source>
</evidence>
<evidence type="ECO:0000269" key="3">
    <source>
    </source>
</evidence>
<evidence type="ECO:0000305" key="4"/>
<name>SIX3A_LEIHE</name>
<protein>
    <recommendedName>
        <fullName>Beta-insect depressant toxin Lqh-dprIT3a</fullName>
    </recommendedName>
</protein>
<comment type="function">
    <text evidence="3">Depressant insect beta-toxins cause a transient contraction paralysis followed by a slow flaccid paralysis. They bind voltage-independently at site-4 of sodium channels (Nav) and block action potentials, primarily by depolarizing the axonal membrane and suppressing the sodium current. This depressant toxin is active only on insects. It is found in a relatively small amount in the venom, and its activity on insects is 10-fold higher compared to other known depressant toxins.</text>
</comment>
<comment type="subcellular location">
    <subcellularLocation>
        <location>Secreted</location>
    </subcellularLocation>
</comment>
<comment type="tissue specificity">
    <text>Expressed by the venom gland.</text>
</comment>
<comment type="domain">
    <text evidence="4">Has the structural arrangement of an alpha-helix connected to antiparallel beta-sheets by disulfide bonds (CS-alpha/beta).</text>
</comment>
<comment type="toxic dose">
    <text evidence="3">PD(50) is 3-5 ng/100 mg of body weight of Sarcophaga larvae for both contraction and flaccid paralysis.</text>
</comment>
<comment type="similarity">
    <text evidence="4">Belongs to the long (4 C-C) scorpion toxin superfamily. Sodium channel inhibitor family. Beta subfamily.</text>
</comment>
<keyword id="KW-0027">Amidation</keyword>
<keyword id="KW-0903">Direct protein sequencing</keyword>
<keyword id="KW-1015">Disulfide bond</keyword>
<keyword id="KW-0872">Ion channel impairing toxin</keyword>
<keyword id="KW-0528">Neurotoxin</keyword>
<keyword id="KW-0964">Secreted</keyword>
<keyword id="KW-0732">Signal</keyword>
<keyword id="KW-0800">Toxin</keyword>
<keyword id="KW-0738">Voltage-gated sodium channel impairing toxin</keyword>
<sequence length="85" mass="9217">MKLLLLLTISASMLIEGLVNADGYIRGGDGCKVSCVINHVFCDNECKAAGGSYGYCWAWGLACWCEGLPADREWDYETNTCGGKK</sequence>